<sequence length="505" mass="51809">MSTHTARPLGPQLALAGTVGKRVDVLVIGLTSASDGPEIALGDGIVDESVLTGLLDTLVAVGASGKAEETTRIPAPDTLPVDSVLAVGLGSAEKLDAEQIRKSAGAAARSLSGVGTVATTLSVLDLGAAAEGFALGAYRFNEFKSAKSAPGPDAQPVSRVELLVSSPRAKESKETLARSAAIAEAVATAREFVNTPPSHLFPAEFADRAKALGTDAGLKVEVLDEKALEKNGYGGILGVGKGSSRLPRLVRLSYSAKKRNAPKVALVGKGITFDTGGISIKPAAGMENMTSDMGGAAAVVATVVLAAKLGLPVDVTATVPMAENMPSSTAQRPGDVLTQYGGTTVEVINTDAEGRLVLADAIVRACEDDPDYLIDTATLTGAQMVALGNRTPGVMGTDEFRDRVAAISQEIGENAWAMPMPAELRSDLDSKVADLANVTNHRWGGMLAAALYLKEFVADGVQWAHIDVAGPAYNSSGPWGYTGRGGTGVPVRTMISVIEDIAANG</sequence>
<feature type="chain" id="PRO_1000098342" description="Probable cytosol aminopeptidase">
    <location>
        <begin position="1"/>
        <end position="505"/>
    </location>
</feature>
<feature type="active site" evidence="1">
    <location>
        <position position="281"/>
    </location>
</feature>
<feature type="active site" evidence="1">
    <location>
        <position position="355"/>
    </location>
</feature>
<feature type="binding site" evidence="1">
    <location>
        <position position="269"/>
    </location>
    <ligand>
        <name>Mn(2+)</name>
        <dbReference type="ChEBI" id="CHEBI:29035"/>
        <label>2</label>
    </ligand>
</feature>
<feature type="binding site" evidence="1">
    <location>
        <position position="274"/>
    </location>
    <ligand>
        <name>Mn(2+)</name>
        <dbReference type="ChEBI" id="CHEBI:29035"/>
        <label>1</label>
    </ligand>
</feature>
<feature type="binding site" evidence="1">
    <location>
        <position position="274"/>
    </location>
    <ligand>
        <name>Mn(2+)</name>
        <dbReference type="ChEBI" id="CHEBI:29035"/>
        <label>2</label>
    </ligand>
</feature>
<feature type="binding site" evidence="1">
    <location>
        <position position="292"/>
    </location>
    <ligand>
        <name>Mn(2+)</name>
        <dbReference type="ChEBI" id="CHEBI:29035"/>
        <label>2</label>
    </ligand>
</feature>
<feature type="binding site" evidence="1">
    <location>
        <position position="351"/>
    </location>
    <ligand>
        <name>Mn(2+)</name>
        <dbReference type="ChEBI" id="CHEBI:29035"/>
        <label>1</label>
    </ligand>
</feature>
<feature type="binding site" evidence="1">
    <location>
        <position position="353"/>
    </location>
    <ligand>
        <name>Mn(2+)</name>
        <dbReference type="ChEBI" id="CHEBI:29035"/>
        <label>1</label>
    </ligand>
</feature>
<feature type="binding site" evidence="1">
    <location>
        <position position="353"/>
    </location>
    <ligand>
        <name>Mn(2+)</name>
        <dbReference type="ChEBI" id="CHEBI:29035"/>
        <label>2</label>
    </ligand>
</feature>
<reference key="1">
    <citation type="journal article" date="2006" name="Proc. Natl. Acad. Sci. U.S.A.">
        <title>The complete genome of Rhodococcus sp. RHA1 provides insights into a catabolic powerhouse.</title>
        <authorList>
            <person name="McLeod M.P."/>
            <person name="Warren R.L."/>
            <person name="Hsiao W.W.L."/>
            <person name="Araki N."/>
            <person name="Myhre M."/>
            <person name="Fernandes C."/>
            <person name="Miyazawa D."/>
            <person name="Wong W."/>
            <person name="Lillquist A.L."/>
            <person name="Wang D."/>
            <person name="Dosanjh M."/>
            <person name="Hara H."/>
            <person name="Petrescu A."/>
            <person name="Morin R.D."/>
            <person name="Yang G."/>
            <person name="Stott J.M."/>
            <person name="Schein J.E."/>
            <person name="Shin H."/>
            <person name="Smailus D."/>
            <person name="Siddiqui A.S."/>
            <person name="Marra M.A."/>
            <person name="Jones S.J.M."/>
            <person name="Holt R."/>
            <person name="Brinkman F.S.L."/>
            <person name="Miyauchi K."/>
            <person name="Fukuda M."/>
            <person name="Davies J.E."/>
            <person name="Mohn W.W."/>
            <person name="Eltis L.D."/>
        </authorList>
    </citation>
    <scope>NUCLEOTIDE SEQUENCE [LARGE SCALE GENOMIC DNA]</scope>
    <source>
        <strain>RHA1</strain>
    </source>
</reference>
<accession>Q0SHL0</accession>
<dbReference type="EC" id="3.4.11.1" evidence="1"/>
<dbReference type="EC" id="3.4.11.10" evidence="1"/>
<dbReference type="EMBL" id="CP000431">
    <property type="protein sequence ID" value="ABG92976.1"/>
    <property type="molecule type" value="Genomic_DNA"/>
</dbReference>
<dbReference type="RefSeq" id="WP_011594264.1">
    <property type="nucleotide sequence ID" value="NC_008268.1"/>
</dbReference>
<dbReference type="SMR" id="Q0SHL0"/>
<dbReference type="KEGG" id="rha:RHA1_ro01149"/>
<dbReference type="PATRIC" id="fig|101510.16.peg.1176"/>
<dbReference type="eggNOG" id="COG0260">
    <property type="taxonomic scope" value="Bacteria"/>
</dbReference>
<dbReference type="HOGENOM" id="CLU_013734_2_2_11"/>
<dbReference type="OrthoDB" id="9809354at2"/>
<dbReference type="Proteomes" id="UP000008710">
    <property type="component" value="Chromosome"/>
</dbReference>
<dbReference type="GO" id="GO:0005737">
    <property type="term" value="C:cytoplasm"/>
    <property type="evidence" value="ECO:0007669"/>
    <property type="project" value="UniProtKB-SubCell"/>
</dbReference>
<dbReference type="GO" id="GO:0030145">
    <property type="term" value="F:manganese ion binding"/>
    <property type="evidence" value="ECO:0007669"/>
    <property type="project" value="UniProtKB-UniRule"/>
</dbReference>
<dbReference type="GO" id="GO:0070006">
    <property type="term" value="F:metalloaminopeptidase activity"/>
    <property type="evidence" value="ECO:0007669"/>
    <property type="project" value="InterPro"/>
</dbReference>
<dbReference type="GO" id="GO:0006508">
    <property type="term" value="P:proteolysis"/>
    <property type="evidence" value="ECO:0007669"/>
    <property type="project" value="UniProtKB-KW"/>
</dbReference>
<dbReference type="CDD" id="cd00433">
    <property type="entry name" value="Peptidase_M17"/>
    <property type="match status" value="1"/>
</dbReference>
<dbReference type="Gene3D" id="3.40.220.10">
    <property type="entry name" value="Leucine Aminopeptidase, subunit E, domain 1"/>
    <property type="match status" value="1"/>
</dbReference>
<dbReference type="Gene3D" id="3.40.630.10">
    <property type="entry name" value="Zn peptidases"/>
    <property type="match status" value="1"/>
</dbReference>
<dbReference type="HAMAP" id="MF_00181">
    <property type="entry name" value="Cytosol_peptidase_M17"/>
    <property type="match status" value="1"/>
</dbReference>
<dbReference type="InterPro" id="IPR011356">
    <property type="entry name" value="Leucine_aapep/pepB"/>
</dbReference>
<dbReference type="InterPro" id="IPR043472">
    <property type="entry name" value="Macro_dom-like"/>
</dbReference>
<dbReference type="InterPro" id="IPR000819">
    <property type="entry name" value="Peptidase_M17_C"/>
</dbReference>
<dbReference type="InterPro" id="IPR023042">
    <property type="entry name" value="Peptidase_M17_leu_NH2_pept"/>
</dbReference>
<dbReference type="InterPro" id="IPR008283">
    <property type="entry name" value="Peptidase_M17_N"/>
</dbReference>
<dbReference type="NCBIfam" id="NF002073">
    <property type="entry name" value="PRK00913.1-2"/>
    <property type="match status" value="1"/>
</dbReference>
<dbReference type="PANTHER" id="PTHR11963:SF23">
    <property type="entry name" value="CYTOSOL AMINOPEPTIDASE"/>
    <property type="match status" value="1"/>
</dbReference>
<dbReference type="PANTHER" id="PTHR11963">
    <property type="entry name" value="LEUCINE AMINOPEPTIDASE-RELATED"/>
    <property type="match status" value="1"/>
</dbReference>
<dbReference type="Pfam" id="PF00883">
    <property type="entry name" value="Peptidase_M17"/>
    <property type="match status" value="1"/>
</dbReference>
<dbReference type="Pfam" id="PF02789">
    <property type="entry name" value="Peptidase_M17_N"/>
    <property type="match status" value="1"/>
</dbReference>
<dbReference type="PRINTS" id="PR00481">
    <property type="entry name" value="LAMNOPPTDASE"/>
</dbReference>
<dbReference type="SUPFAM" id="SSF52949">
    <property type="entry name" value="Macro domain-like"/>
    <property type="match status" value="1"/>
</dbReference>
<dbReference type="SUPFAM" id="SSF53187">
    <property type="entry name" value="Zn-dependent exopeptidases"/>
    <property type="match status" value="1"/>
</dbReference>
<dbReference type="PROSITE" id="PS00631">
    <property type="entry name" value="CYTOSOL_AP"/>
    <property type="match status" value="1"/>
</dbReference>
<keyword id="KW-0031">Aminopeptidase</keyword>
<keyword id="KW-0963">Cytoplasm</keyword>
<keyword id="KW-0378">Hydrolase</keyword>
<keyword id="KW-0464">Manganese</keyword>
<keyword id="KW-0479">Metal-binding</keyword>
<keyword id="KW-0645">Protease</keyword>
<gene>
    <name evidence="1" type="primary">pepA</name>
    <name type="ordered locus">RHA1_ro01149</name>
</gene>
<protein>
    <recommendedName>
        <fullName evidence="1">Probable cytosol aminopeptidase</fullName>
        <ecNumber evidence="1">3.4.11.1</ecNumber>
    </recommendedName>
    <alternativeName>
        <fullName evidence="1">Leucine aminopeptidase</fullName>
        <shortName evidence="1">LAP</shortName>
        <ecNumber evidence="1">3.4.11.10</ecNumber>
    </alternativeName>
    <alternativeName>
        <fullName evidence="1">Leucyl aminopeptidase</fullName>
    </alternativeName>
</protein>
<organism>
    <name type="scientific">Rhodococcus jostii (strain RHA1)</name>
    <dbReference type="NCBI Taxonomy" id="101510"/>
    <lineage>
        <taxon>Bacteria</taxon>
        <taxon>Bacillati</taxon>
        <taxon>Actinomycetota</taxon>
        <taxon>Actinomycetes</taxon>
        <taxon>Mycobacteriales</taxon>
        <taxon>Nocardiaceae</taxon>
        <taxon>Rhodococcus</taxon>
    </lineage>
</organism>
<evidence type="ECO:0000255" key="1">
    <source>
        <dbReference type="HAMAP-Rule" id="MF_00181"/>
    </source>
</evidence>
<comment type="function">
    <text evidence="1">Presumably involved in the processing and regular turnover of intracellular proteins. Catalyzes the removal of unsubstituted N-terminal amino acids from various peptides.</text>
</comment>
<comment type="catalytic activity">
    <reaction evidence="1">
        <text>Release of an N-terminal amino acid, Xaa-|-Yaa-, in which Xaa is preferably Leu, but may be other amino acids including Pro although not Arg or Lys, and Yaa may be Pro. Amino acid amides and methyl esters are also readily hydrolyzed, but rates on arylamides are exceedingly low.</text>
        <dbReference type="EC" id="3.4.11.1"/>
    </reaction>
</comment>
<comment type="catalytic activity">
    <reaction evidence="1">
        <text>Release of an N-terminal amino acid, preferentially leucine, but not glutamic or aspartic acids.</text>
        <dbReference type="EC" id="3.4.11.10"/>
    </reaction>
</comment>
<comment type="cofactor">
    <cofactor evidence="1">
        <name>Mn(2+)</name>
        <dbReference type="ChEBI" id="CHEBI:29035"/>
    </cofactor>
    <text evidence="1">Binds 2 manganese ions per subunit.</text>
</comment>
<comment type="subcellular location">
    <subcellularLocation>
        <location evidence="1">Cytoplasm</location>
    </subcellularLocation>
</comment>
<comment type="similarity">
    <text evidence="1">Belongs to the peptidase M17 family.</text>
</comment>
<name>AMPA_RHOJR</name>
<proteinExistence type="inferred from homology"/>